<gene>
    <name evidence="1" type="primary">hisA</name>
    <name type="ordered locus">BPUM_3123</name>
</gene>
<proteinExistence type="inferred from homology"/>
<feature type="chain" id="PRO_1000063185" description="1-(5-phosphoribosyl)-5-[(5-phosphoribosylamino)methylideneamino] imidazole-4-carboxamide isomerase">
    <location>
        <begin position="1"/>
        <end position="245"/>
    </location>
</feature>
<feature type="active site" description="Proton acceptor" evidence="1">
    <location>
        <position position="11"/>
    </location>
</feature>
<feature type="active site" description="Proton donor" evidence="1">
    <location>
        <position position="132"/>
    </location>
</feature>
<evidence type="ECO:0000255" key="1">
    <source>
        <dbReference type="HAMAP-Rule" id="MF_01014"/>
    </source>
</evidence>
<reference key="1">
    <citation type="journal article" date="2007" name="PLoS ONE">
        <title>Paradoxical DNA repair and peroxide resistance gene conservation in Bacillus pumilus SAFR-032.</title>
        <authorList>
            <person name="Gioia J."/>
            <person name="Yerrapragada S."/>
            <person name="Qin X."/>
            <person name="Jiang H."/>
            <person name="Igboeli O.C."/>
            <person name="Muzny D."/>
            <person name="Dugan-Rocha S."/>
            <person name="Ding Y."/>
            <person name="Hawes A."/>
            <person name="Liu W."/>
            <person name="Perez L."/>
            <person name="Kovar C."/>
            <person name="Dinh H."/>
            <person name="Lee S."/>
            <person name="Nazareth L."/>
            <person name="Blyth P."/>
            <person name="Holder M."/>
            <person name="Buhay C."/>
            <person name="Tirumalai M.R."/>
            <person name="Liu Y."/>
            <person name="Dasgupta I."/>
            <person name="Bokhetache L."/>
            <person name="Fujita M."/>
            <person name="Karouia F."/>
            <person name="Eswara Moorthy P."/>
            <person name="Siefert J."/>
            <person name="Uzman A."/>
            <person name="Buzumbo P."/>
            <person name="Verma A."/>
            <person name="Zwiya H."/>
            <person name="McWilliams B.D."/>
            <person name="Olowu A."/>
            <person name="Clinkenbeard K.D."/>
            <person name="Newcombe D."/>
            <person name="Golebiewski L."/>
            <person name="Petrosino J.F."/>
            <person name="Nicholson W.L."/>
            <person name="Fox G.E."/>
            <person name="Venkateswaran K."/>
            <person name="Highlander S.K."/>
            <person name="Weinstock G.M."/>
        </authorList>
    </citation>
    <scope>NUCLEOTIDE SEQUENCE [LARGE SCALE GENOMIC DNA]</scope>
    <source>
        <strain>SAFR-032</strain>
    </source>
</reference>
<keyword id="KW-0028">Amino-acid biosynthesis</keyword>
<keyword id="KW-0963">Cytoplasm</keyword>
<keyword id="KW-0368">Histidine biosynthesis</keyword>
<keyword id="KW-0413">Isomerase</keyword>
<name>HIS4_BACP2</name>
<accession>A8FHR0</accession>
<sequence>MSEFTLYPAIDMRNGKCVRLVQGDYDQETIYGDSPLDMATRFANEGAKWIHLVDLDGAKAGNRVNHEHVLAIASSLDVKVQIGGGIRTEEDVAFYINNGVARVILGSSAVSNSAFVKKMLAQYGEKIAIGIDARNGFVSTEGWLETSKVKAEDLGKELAKEGAEVFIFTDIQMDGMLAGPNVESTVRLAEATGKQVIASGGISSVADLQKLSAQKQTGVSGAIIGKALYTERFTLAEAIEGLDRV</sequence>
<protein>
    <recommendedName>
        <fullName evidence="1">1-(5-phosphoribosyl)-5-[(5-phosphoribosylamino)methylideneamino] imidazole-4-carboxamide isomerase</fullName>
        <ecNumber evidence="1">5.3.1.16</ecNumber>
    </recommendedName>
    <alternativeName>
        <fullName evidence="1">Phosphoribosylformimino-5-aminoimidazole carboxamide ribotide isomerase</fullName>
    </alternativeName>
</protein>
<comment type="catalytic activity">
    <reaction evidence="1">
        <text>1-(5-phospho-beta-D-ribosyl)-5-[(5-phospho-beta-D-ribosylamino)methylideneamino]imidazole-4-carboxamide = 5-[(5-phospho-1-deoxy-D-ribulos-1-ylimino)methylamino]-1-(5-phospho-beta-D-ribosyl)imidazole-4-carboxamide</text>
        <dbReference type="Rhea" id="RHEA:15469"/>
        <dbReference type="ChEBI" id="CHEBI:58435"/>
        <dbReference type="ChEBI" id="CHEBI:58525"/>
        <dbReference type="EC" id="5.3.1.16"/>
    </reaction>
</comment>
<comment type="pathway">
    <text evidence="1">Amino-acid biosynthesis; L-histidine biosynthesis; L-histidine from 5-phospho-alpha-D-ribose 1-diphosphate: step 4/9.</text>
</comment>
<comment type="subcellular location">
    <subcellularLocation>
        <location evidence="1">Cytoplasm</location>
    </subcellularLocation>
</comment>
<comment type="similarity">
    <text evidence="1">Belongs to the HisA/HisF family.</text>
</comment>
<organism>
    <name type="scientific">Bacillus pumilus (strain SAFR-032)</name>
    <dbReference type="NCBI Taxonomy" id="315750"/>
    <lineage>
        <taxon>Bacteria</taxon>
        <taxon>Bacillati</taxon>
        <taxon>Bacillota</taxon>
        <taxon>Bacilli</taxon>
        <taxon>Bacillales</taxon>
        <taxon>Bacillaceae</taxon>
        <taxon>Bacillus</taxon>
    </lineage>
</organism>
<dbReference type="EC" id="5.3.1.16" evidence="1"/>
<dbReference type="EMBL" id="CP000813">
    <property type="protein sequence ID" value="ABV63777.1"/>
    <property type="molecule type" value="Genomic_DNA"/>
</dbReference>
<dbReference type="RefSeq" id="WP_012011366.1">
    <property type="nucleotide sequence ID" value="NZ_VEIS01000009.1"/>
</dbReference>
<dbReference type="SMR" id="A8FHR0"/>
<dbReference type="STRING" id="315750.BPUM_3123"/>
<dbReference type="GeneID" id="5622414"/>
<dbReference type="KEGG" id="bpu:BPUM_3123"/>
<dbReference type="eggNOG" id="COG0106">
    <property type="taxonomic scope" value="Bacteria"/>
</dbReference>
<dbReference type="HOGENOM" id="CLU_048577_1_1_9"/>
<dbReference type="OrthoDB" id="9807749at2"/>
<dbReference type="UniPathway" id="UPA00031">
    <property type="reaction ID" value="UER00009"/>
</dbReference>
<dbReference type="Proteomes" id="UP000001355">
    <property type="component" value="Chromosome"/>
</dbReference>
<dbReference type="GO" id="GO:0005737">
    <property type="term" value="C:cytoplasm"/>
    <property type="evidence" value="ECO:0007669"/>
    <property type="project" value="UniProtKB-SubCell"/>
</dbReference>
<dbReference type="GO" id="GO:0003949">
    <property type="term" value="F:1-(5-phosphoribosyl)-5-[(5-phosphoribosylamino)methylideneamino]imidazole-4-carboxamide isomerase activity"/>
    <property type="evidence" value="ECO:0007669"/>
    <property type="project" value="UniProtKB-UniRule"/>
</dbReference>
<dbReference type="GO" id="GO:0000105">
    <property type="term" value="P:L-histidine biosynthetic process"/>
    <property type="evidence" value="ECO:0007669"/>
    <property type="project" value="UniProtKB-UniRule"/>
</dbReference>
<dbReference type="GO" id="GO:0000162">
    <property type="term" value="P:L-tryptophan biosynthetic process"/>
    <property type="evidence" value="ECO:0007669"/>
    <property type="project" value="TreeGrafter"/>
</dbReference>
<dbReference type="CDD" id="cd04732">
    <property type="entry name" value="HisA"/>
    <property type="match status" value="1"/>
</dbReference>
<dbReference type="FunFam" id="3.20.20.70:FF:000009">
    <property type="entry name" value="1-(5-phosphoribosyl)-5-[(5-phosphoribosylamino)methylideneamino] imidazole-4-carboxamide isomerase"/>
    <property type="match status" value="1"/>
</dbReference>
<dbReference type="Gene3D" id="3.20.20.70">
    <property type="entry name" value="Aldolase class I"/>
    <property type="match status" value="1"/>
</dbReference>
<dbReference type="HAMAP" id="MF_01014">
    <property type="entry name" value="HisA"/>
    <property type="match status" value="1"/>
</dbReference>
<dbReference type="InterPro" id="IPR013785">
    <property type="entry name" value="Aldolase_TIM"/>
</dbReference>
<dbReference type="InterPro" id="IPR006062">
    <property type="entry name" value="His_biosynth"/>
</dbReference>
<dbReference type="InterPro" id="IPR006063">
    <property type="entry name" value="HisA_bact_arch"/>
</dbReference>
<dbReference type="InterPro" id="IPR044524">
    <property type="entry name" value="Isoase_HisA-like"/>
</dbReference>
<dbReference type="InterPro" id="IPR023016">
    <property type="entry name" value="Isoase_HisA-like_bact"/>
</dbReference>
<dbReference type="InterPro" id="IPR011060">
    <property type="entry name" value="RibuloseP-bd_barrel"/>
</dbReference>
<dbReference type="NCBIfam" id="TIGR00007">
    <property type="entry name" value="1-(5-phosphoribosyl)-5-[(5-phosphoribosylamino)methylideneamino]imidazole-4-carboxamide isomerase"/>
    <property type="match status" value="1"/>
</dbReference>
<dbReference type="PANTHER" id="PTHR43090">
    <property type="entry name" value="1-(5-PHOSPHORIBOSYL)-5-[(5-PHOSPHORIBOSYLAMINO)METHYLIDENEAMINO] IMIDAZOLE-4-CARBOXAMIDE ISOMERASE"/>
    <property type="match status" value="1"/>
</dbReference>
<dbReference type="PANTHER" id="PTHR43090:SF2">
    <property type="entry name" value="1-(5-PHOSPHORIBOSYL)-5-[(5-PHOSPHORIBOSYLAMINO)METHYLIDENEAMINO] IMIDAZOLE-4-CARBOXAMIDE ISOMERASE"/>
    <property type="match status" value="1"/>
</dbReference>
<dbReference type="Pfam" id="PF00977">
    <property type="entry name" value="His_biosynth"/>
    <property type="match status" value="1"/>
</dbReference>
<dbReference type="SUPFAM" id="SSF51366">
    <property type="entry name" value="Ribulose-phoshate binding barrel"/>
    <property type="match status" value="1"/>
</dbReference>